<keyword id="KW-0067">ATP-binding</keyword>
<keyword id="KW-0175">Coiled coil</keyword>
<keyword id="KW-0418">Kinase</keyword>
<keyword id="KW-0547">Nucleotide-binding</keyword>
<keyword id="KW-1185">Reference proteome</keyword>
<keyword id="KW-0723">Serine/threonine-protein kinase</keyword>
<keyword id="KW-0808">Transferase</keyword>
<gene>
    <name type="ORF">DDB_G0282417</name>
</gene>
<name>Y2417_DICDI</name>
<sequence>MHQPSDFTNLDVNFLIFQSNLPITNNAPTDISIVNNSINILPVEINNNNNNNNNNNNNNNNNNNNNNNNNNNNNKNNNDGDDAAATNSINVIPVFEKTIQIGTTTKSGHFILDATAEVNDIQEIEENKDFIVRDTQQNRVLIGEGHYGKVYRSMYVSSDGRSLVNKMLKGKRECTKEVEALIDVFDASKMVTTQYFTTLGFSSIIMENMVDIGYVTLKQLLSMDDKQFSALASPFTCRSQMIKPIINAMVIALYSVNIEKNYTHFDLNHGNIFVNIHTLDTCQSISGSGSGSGSGSGSNTRNPVVLGDFGCARKMDVPIRLCDTNGHENYKSLERYWDYNQCRIKTTSFIRDNEDIFSLGVLIFEMLLTFVHPGTTLFEQNVLFLLKFHGIEIVPTGGPNNNYTTLKVAFSNDIRNFTSNTQFTTITFDSKFNPIISQIINYIQYYRNRPNSSQVLESLINNHQYSLNNNLPPIFVENPNDKYEPVDANSSDDSSVLYHSYDSSDADDTPSFEITITRDNFNQSINHQ</sequence>
<comment type="catalytic activity">
    <reaction>
        <text>L-seryl-[protein] + ATP = O-phospho-L-seryl-[protein] + ADP + H(+)</text>
        <dbReference type="Rhea" id="RHEA:17989"/>
        <dbReference type="Rhea" id="RHEA-COMP:9863"/>
        <dbReference type="Rhea" id="RHEA-COMP:11604"/>
        <dbReference type="ChEBI" id="CHEBI:15378"/>
        <dbReference type="ChEBI" id="CHEBI:29999"/>
        <dbReference type="ChEBI" id="CHEBI:30616"/>
        <dbReference type="ChEBI" id="CHEBI:83421"/>
        <dbReference type="ChEBI" id="CHEBI:456216"/>
        <dbReference type="EC" id="2.7.11.1"/>
    </reaction>
</comment>
<comment type="catalytic activity">
    <reaction>
        <text>L-threonyl-[protein] + ATP = O-phospho-L-threonyl-[protein] + ADP + H(+)</text>
        <dbReference type="Rhea" id="RHEA:46608"/>
        <dbReference type="Rhea" id="RHEA-COMP:11060"/>
        <dbReference type="Rhea" id="RHEA-COMP:11605"/>
        <dbReference type="ChEBI" id="CHEBI:15378"/>
        <dbReference type="ChEBI" id="CHEBI:30013"/>
        <dbReference type="ChEBI" id="CHEBI:30616"/>
        <dbReference type="ChEBI" id="CHEBI:61977"/>
        <dbReference type="ChEBI" id="CHEBI:456216"/>
        <dbReference type="EC" id="2.7.11.1"/>
    </reaction>
</comment>
<comment type="similarity">
    <text evidence="1">Belongs to the protein kinase superfamily. Ser/Thr protein kinase family.</text>
</comment>
<organism>
    <name type="scientific">Dictyostelium discoideum</name>
    <name type="common">Social amoeba</name>
    <dbReference type="NCBI Taxonomy" id="44689"/>
    <lineage>
        <taxon>Eukaryota</taxon>
        <taxon>Amoebozoa</taxon>
        <taxon>Evosea</taxon>
        <taxon>Eumycetozoa</taxon>
        <taxon>Dictyostelia</taxon>
        <taxon>Dictyosteliales</taxon>
        <taxon>Dictyosteliaceae</taxon>
        <taxon>Dictyostelium</taxon>
    </lineage>
</organism>
<reference key="1">
    <citation type="journal article" date="2005" name="Nature">
        <title>The genome of the social amoeba Dictyostelium discoideum.</title>
        <authorList>
            <person name="Eichinger L."/>
            <person name="Pachebat J.A."/>
            <person name="Gloeckner G."/>
            <person name="Rajandream M.A."/>
            <person name="Sucgang R."/>
            <person name="Berriman M."/>
            <person name="Song J."/>
            <person name="Olsen R."/>
            <person name="Szafranski K."/>
            <person name="Xu Q."/>
            <person name="Tunggal B."/>
            <person name="Kummerfeld S."/>
            <person name="Madera M."/>
            <person name="Konfortov B.A."/>
            <person name="Rivero F."/>
            <person name="Bankier A.T."/>
            <person name="Lehmann R."/>
            <person name="Hamlin N."/>
            <person name="Davies R."/>
            <person name="Gaudet P."/>
            <person name="Fey P."/>
            <person name="Pilcher K."/>
            <person name="Chen G."/>
            <person name="Saunders D."/>
            <person name="Sodergren E.J."/>
            <person name="Davis P."/>
            <person name="Kerhornou A."/>
            <person name="Nie X."/>
            <person name="Hall N."/>
            <person name="Anjard C."/>
            <person name="Hemphill L."/>
            <person name="Bason N."/>
            <person name="Farbrother P."/>
            <person name="Desany B."/>
            <person name="Just E."/>
            <person name="Morio T."/>
            <person name="Rost R."/>
            <person name="Churcher C.M."/>
            <person name="Cooper J."/>
            <person name="Haydock S."/>
            <person name="van Driessche N."/>
            <person name="Cronin A."/>
            <person name="Goodhead I."/>
            <person name="Muzny D.M."/>
            <person name="Mourier T."/>
            <person name="Pain A."/>
            <person name="Lu M."/>
            <person name="Harper D."/>
            <person name="Lindsay R."/>
            <person name="Hauser H."/>
            <person name="James K.D."/>
            <person name="Quiles M."/>
            <person name="Madan Babu M."/>
            <person name="Saito T."/>
            <person name="Buchrieser C."/>
            <person name="Wardroper A."/>
            <person name="Felder M."/>
            <person name="Thangavelu M."/>
            <person name="Johnson D."/>
            <person name="Knights A."/>
            <person name="Loulseged H."/>
            <person name="Mungall K.L."/>
            <person name="Oliver K."/>
            <person name="Price C."/>
            <person name="Quail M.A."/>
            <person name="Urushihara H."/>
            <person name="Hernandez J."/>
            <person name="Rabbinowitsch E."/>
            <person name="Steffen D."/>
            <person name="Sanders M."/>
            <person name="Ma J."/>
            <person name="Kohara Y."/>
            <person name="Sharp S."/>
            <person name="Simmonds M.N."/>
            <person name="Spiegler S."/>
            <person name="Tivey A."/>
            <person name="Sugano S."/>
            <person name="White B."/>
            <person name="Walker D."/>
            <person name="Woodward J.R."/>
            <person name="Winckler T."/>
            <person name="Tanaka Y."/>
            <person name="Shaulsky G."/>
            <person name="Schleicher M."/>
            <person name="Weinstock G.M."/>
            <person name="Rosenthal A."/>
            <person name="Cox E.C."/>
            <person name="Chisholm R.L."/>
            <person name="Gibbs R.A."/>
            <person name="Loomis W.F."/>
            <person name="Platzer M."/>
            <person name="Kay R.R."/>
            <person name="Williams J.G."/>
            <person name="Dear P.H."/>
            <person name="Noegel A.A."/>
            <person name="Barrell B.G."/>
            <person name="Kuspa A."/>
        </authorList>
    </citation>
    <scope>NUCLEOTIDE SEQUENCE [LARGE SCALE GENOMIC DNA]</scope>
    <source>
        <strain>AX4</strain>
    </source>
</reference>
<evidence type="ECO:0000255" key="1">
    <source>
        <dbReference type="PROSITE-ProRule" id="PRU00159"/>
    </source>
</evidence>
<evidence type="ECO:0000256" key="2">
    <source>
        <dbReference type="SAM" id="MobiDB-lite"/>
    </source>
</evidence>
<protein>
    <recommendedName>
        <fullName>Probable serine/threonine-protein kinase DDB_G0282417</fullName>
        <ecNumber>2.7.11.1</ecNumber>
    </recommendedName>
</protein>
<proteinExistence type="inferred from homology"/>
<accession>Q54SK3</accession>
<dbReference type="EC" id="2.7.11.1"/>
<dbReference type="EMBL" id="AAFI02000047">
    <property type="protein sequence ID" value="EAL66068.1"/>
    <property type="molecule type" value="Genomic_DNA"/>
</dbReference>
<dbReference type="RefSeq" id="XP_640036.1">
    <property type="nucleotide sequence ID" value="XM_634944.1"/>
</dbReference>
<dbReference type="STRING" id="44689.Q54SK3"/>
<dbReference type="PaxDb" id="44689-DDB0231179"/>
<dbReference type="EnsemblProtists" id="EAL66068">
    <property type="protein sequence ID" value="EAL66068"/>
    <property type="gene ID" value="DDB_G0282417"/>
</dbReference>
<dbReference type="GeneID" id="8623562"/>
<dbReference type="KEGG" id="ddi:DDB_G0282417"/>
<dbReference type="dictyBase" id="DDB_G0282417"/>
<dbReference type="VEuPathDB" id="AmoebaDB:DDB_G0282417"/>
<dbReference type="HOGENOM" id="CLU_516249_0_0_1"/>
<dbReference type="InParanoid" id="Q54SK3"/>
<dbReference type="PRO" id="PR:Q54SK3"/>
<dbReference type="Proteomes" id="UP000002195">
    <property type="component" value="Chromosome 3"/>
</dbReference>
<dbReference type="GO" id="GO:0005737">
    <property type="term" value="C:cytoplasm"/>
    <property type="evidence" value="ECO:0000318"/>
    <property type="project" value="GO_Central"/>
</dbReference>
<dbReference type="GO" id="GO:0005524">
    <property type="term" value="F:ATP binding"/>
    <property type="evidence" value="ECO:0007669"/>
    <property type="project" value="UniProtKB-KW"/>
</dbReference>
<dbReference type="GO" id="GO:0004672">
    <property type="term" value="F:protein kinase activity"/>
    <property type="evidence" value="ECO:0000318"/>
    <property type="project" value="GO_Central"/>
</dbReference>
<dbReference type="GO" id="GO:0106310">
    <property type="term" value="F:protein serine kinase activity"/>
    <property type="evidence" value="ECO:0007669"/>
    <property type="project" value="RHEA"/>
</dbReference>
<dbReference type="GO" id="GO:0004674">
    <property type="term" value="F:protein serine/threonine kinase activity"/>
    <property type="evidence" value="ECO:0007669"/>
    <property type="project" value="UniProtKB-KW"/>
</dbReference>
<dbReference type="GO" id="GO:0007165">
    <property type="term" value="P:signal transduction"/>
    <property type="evidence" value="ECO:0000318"/>
    <property type="project" value="GO_Central"/>
</dbReference>
<dbReference type="Gene3D" id="1.10.510.10">
    <property type="entry name" value="Transferase(Phosphotransferase) domain 1"/>
    <property type="match status" value="1"/>
</dbReference>
<dbReference type="InterPro" id="IPR011009">
    <property type="entry name" value="Kinase-like_dom_sf"/>
</dbReference>
<dbReference type="InterPro" id="IPR000719">
    <property type="entry name" value="Prot_kinase_dom"/>
</dbReference>
<dbReference type="PANTHER" id="PTHR44167">
    <property type="entry name" value="OVARIAN-SPECIFIC SERINE/THREONINE-PROTEIN KINASE LOK-RELATED"/>
    <property type="match status" value="1"/>
</dbReference>
<dbReference type="PANTHER" id="PTHR44167:SF24">
    <property type="entry name" value="SERINE_THREONINE-PROTEIN KINASE CHK2"/>
    <property type="match status" value="1"/>
</dbReference>
<dbReference type="Pfam" id="PF00069">
    <property type="entry name" value="Pkinase"/>
    <property type="match status" value="1"/>
</dbReference>
<dbReference type="SMART" id="SM00220">
    <property type="entry name" value="S_TKc"/>
    <property type="match status" value="1"/>
</dbReference>
<dbReference type="SUPFAM" id="SSF56112">
    <property type="entry name" value="Protein kinase-like (PK-like)"/>
    <property type="match status" value="1"/>
</dbReference>
<dbReference type="PROSITE" id="PS50011">
    <property type="entry name" value="PROTEIN_KINASE_DOM"/>
    <property type="match status" value="1"/>
</dbReference>
<feature type="chain" id="PRO_0000362046" description="Probable serine/threonine-protein kinase DDB_G0282417">
    <location>
        <begin position="1"/>
        <end position="528"/>
    </location>
</feature>
<feature type="domain" description="Protein kinase" evidence="1">
    <location>
        <begin position="136"/>
        <end position="466"/>
    </location>
</feature>
<feature type="region of interest" description="Disordered" evidence="2">
    <location>
        <begin position="49"/>
        <end position="84"/>
    </location>
</feature>
<feature type="compositionally biased region" description="Low complexity" evidence="2">
    <location>
        <begin position="49"/>
        <end position="77"/>
    </location>
</feature>
<feature type="active site" description="Proton acceptor" evidence="1">
    <location>
        <position position="266"/>
    </location>
</feature>
<feature type="binding site" evidence="1">
    <location>
        <begin position="142"/>
        <end position="150"/>
    </location>
    <ligand>
        <name>ATP</name>
        <dbReference type="ChEBI" id="CHEBI:30616"/>
    </ligand>
</feature>
<feature type="binding site" evidence="1">
    <location>
        <position position="166"/>
    </location>
    <ligand>
        <name>ATP</name>
        <dbReference type="ChEBI" id="CHEBI:30616"/>
    </ligand>
</feature>